<protein>
    <recommendedName>
        <fullName evidence="6">Small ribosomal subunit protein uS19m</fullName>
    </recommendedName>
    <alternativeName>
        <fullName>37S ribosomal protein S19, mitochondrial</fullName>
    </alternativeName>
</protein>
<dbReference type="EMBL" id="Z71652">
    <property type="protein sequence ID" value="CAA96317.1"/>
    <property type="molecule type" value="Genomic_DNA"/>
</dbReference>
<dbReference type="EMBL" id="BK006947">
    <property type="protein sequence ID" value="DAA10579.1"/>
    <property type="molecule type" value="Genomic_DNA"/>
</dbReference>
<dbReference type="PIR" id="S63368">
    <property type="entry name" value="S63368"/>
</dbReference>
<dbReference type="RefSeq" id="NP_014435.3">
    <property type="nucleotide sequence ID" value="NM_001183214.3"/>
</dbReference>
<dbReference type="PDB" id="5MRC">
    <property type="method" value="EM"/>
    <property type="resolution" value="3.25 A"/>
    <property type="chains" value="SS=9-88"/>
</dbReference>
<dbReference type="PDB" id="5MRE">
    <property type="method" value="EM"/>
    <property type="resolution" value="3.75 A"/>
    <property type="chains" value="SS=9-88"/>
</dbReference>
<dbReference type="PDB" id="5MRF">
    <property type="method" value="EM"/>
    <property type="resolution" value="4.97 A"/>
    <property type="chains" value="SS=9-88"/>
</dbReference>
<dbReference type="PDB" id="8D8K">
    <property type="method" value="EM"/>
    <property type="resolution" value="3.13 A"/>
    <property type="chains" value="S=1-91"/>
</dbReference>
<dbReference type="PDB" id="8D8L">
    <property type="method" value="EM"/>
    <property type="resolution" value="2.60 A"/>
    <property type="chains" value="S=1-91"/>
</dbReference>
<dbReference type="PDB" id="8OM2">
    <property type="method" value="EM"/>
    <property type="resolution" value="2.57 A"/>
    <property type="chains" value="S=1-91"/>
</dbReference>
<dbReference type="PDB" id="8OM3">
    <property type="method" value="EM"/>
    <property type="resolution" value="2.87 A"/>
    <property type="chains" value="S=1-91"/>
</dbReference>
<dbReference type="PDB" id="8OM4">
    <property type="method" value="EM"/>
    <property type="resolution" value="2.32 A"/>
    <property type="chains" value="S=1-91"/>
</dbReference>
<dbReference type="PDBsum" id="5MRC"/>
<dbReference type="PDBsum" id="5MRE"/>
<dbReference type="PDBsum" id="5MRF"/>
<dbReference type="PDBsum" id="8D8K"/>
<dbReference type="PDBsum" id="8D8L"/>
<dbReference type="PDBsum" id="8OM2"/>
<dbReference type="PDBsum" id="8OM3"/>
<dbReference type="PDBsum" id="8OM4"/>
<dbReference type="EMDB" id="EMD-16966"/>
<dbReference type="EMDB" id="EMD-16967"/>
<dbReference type="EMDB" id="EMD-16968"/>
<dbReference type="EMDB" id="EMD-27250"/>
<dbReference type="EMDB" id="EMD-27251"/>
<dbReference type="EMDB" id="EMD-3551"/>
<dbReference type="EMDB" id="EMD-3552"/>
<dbReference type="EMDB" id="EMD-3553"/>
<dbReference type="SMR" id="P53733"/>
<dbReference type="BioGRID" id="35863">
    <property type="interactions" value="221"/>
</dbReference>
<dbReference type="ComplexPortal" id="CPX-1603">
    <property type="entry name" value="37S mitochondrial small ribosomal subunit"/>
</dbReference>
<dbReference type="DIP" id="DIP-4257N"/>
<dbReference type="FunCoup" id="P53733">
    <property type="interactions" value="189"/>
</dbReference>
<dbReference type="IntAct" id="P53733">
    <property type="interactions" value="38"/>
</dbReference>
<dbReference type="MINT" id="P53733"/>
<dbReference type="STRING" id="4932.YNR037C"/>
<dbReference type="PaxDb" id="4932-YNR037C"/>
<dbReference type="PeptideAtlas" id="P53733"/>
<dbReference type="EnsemblFungi" id="YNR037C_mRNA">
    <property type="protein sequence ID" value="YNR037C"/>
    <property type="gene ID" value="YNR037C"/>
</dbReference>
<dbReference type="GeneID" id="855773"/>
<dbReference type="KEGG" id="sce:YNR037C"/>
<dbReference type="AGR" id="SGD:S000005320"/>
<dbReference type="SGD" id="S000005320">
    <property type="gene designation" value="RSM19"/>
</dbReference>
<dbReference type="VEuPathDB" id="FungiDB:YNR037C"/>
<dbReference type="eggNOG" id="KOG0899">
    <property type="taxonomic scope" value="Eukaryota"/>
</dbReference>
<dbReference type="GeneTree" id="ENSGT00390000000475"/>
<dbReference type="HOGENOM" id="CLU_144911_1_0_1"/>
<dbReference type="InParanoid" id="P53733"/>
<dbReference type="OMA" id="YVAFEIT"/>
<dbReference type="OrthoDB" id="2043at2759"/>
<dbReference type="BioCyc" id="YEAST:G3O-33347-MONOMER"/>
<dbReference type="BioGRID-ORCS" id="855773">
    <property type="hits" value="10 hits in 10 CRISPR screens"/>
</dbReference>
<dbReference type="PRO" id="PR:P53733"/>
<dbReference type="Proteomes" id="UP000002311">
    <property type="component" value="Chromosome XIV"/>
</dbReference>
<dbReference type="RNAct" id="P53733">
    <property type="molecule type" value="protein"/>
</dbReference>
<dbReference type="GO" id="GO:0005743">
    <property type="term" value="C:mitochondrial inner membrane"/>
    <property type="evidence" value="ECO:0000303"/>
    <property type="project" value="ComplexPortal"/>
</dbReference>
<dbReference type="GO" id="GO:0005763">
    <property type="term" value="C:mitochondrial small ribosomal subunit"/>
    <property type="evidence" value="ECO:0000314"/>
    <property type="project" value="SGD"/>
</dbReference>
<dbReference type="GO" id="GO:0005739">
    <property type="term" value="C:mitochondrion"/>
    <property type="evidence" value="ECO:0007005"/>
    <property type="project" value="SGD"/>
</dbReference>
<dbReference type="GO" id="GO:0003723">
    <property type="term" value="F:RNA binding"/>
    <property type="evidence" value="ECO:0007669"/>
    <property type="project" value="InterPro"/>
</dbReference>
<dbReference type="GO" id="GO:0003735">
    <property type="term" value="F:structural constituent of ribosome"/>
    <property type="evidence" value="ECO:0000314"/>
    <property type="project" value="SGD"/>
</dbReference>
<dbReference type="GO" id="GO:0032543">
    <property type="term" value="P:mitochondrial translation"/>
    <property type="evidence" value="ECO:0000303"/>
    <property type="project" value="ComplexPortal"/>
</dbReference>
<dbReference type="GO" id="GO:0000028">
    <property type="term" value="P:ribosomal small subunit assembly"/>
    <property type="evidence" value="ECO:0000318"/>
    <property type="project" value="GO_Central"/>
</dbReference>
<dbReference type="FunFam" id="3.30.860.10:FF:000001">
    <property type="entry name" value="30S ribosomal protein S19"/>
    <property type="match status" value="1"/>
</dbReference>
<dbReference type="Gene3D" id="3.30.860.10">
    <property type="entry name" value="30s Ribosomal Protein S19, Chain A"/>
    <property type="match status" value="1"/>
</dbReference>
<dbReference type="HAMAP" id="MF_00531">
    <property type="entry name" value="Ribosomal_uS19"/>
    <property type="match status" value="1"/>
</dbReference>
<dbReference type="InterPro" id="IPR002222">
    <property type="entry name" value="Ribosomal_uS19"/>
</dbReference>
<dbReference type="InterPro" id="IPR020934">
    <property type="entry name" value="Ribosomal_uS19_CS"/>
</dbReference>
<dbReference type="InterPro" id="IPR023575">
    <property type="entry name" value="Ribosomal_uS19_SF"/>
</dbReference>
<dbReference type="PANTHER" id="PTHR11880">
    <property type="entry name" value="RIBOSOMAL PROTEIN S19P FAMILY MEMBER"/>
    <property type="match status" value="1"/>
</dbReference>
<dbReference type="PANTHER" id="PTHR11880:SF8">
    <property type="entry name" value="SMALL RIBOSOMAL SUBUNIT PROTEIN US19M"/>
    <property type="match status" value="1"/>
</dbReference>
<dbReference type="Pfam" id="PF00203">
    <property type="entry name" value="Ribosomal_S19"/>
    <property type="match status" value="1"/>
</dbReference>
<dbReference type="PIRSF" id="PIRSF002144">
    <property type="entry name" value="Ribosomal_S19"/>
    <property type="match status" value="1"/>
</dbReference>
<dbReference type="PRINTS" id="PR00975">
    <property type="entry name" value="RIBOSOMALS19"/>
</dbReference>
<dbReference type="SUPFAM" id="SSF54570">
    <property type="entry name" value="Ribosomal protein S19"/>
    <property type="match status" value="1"/>
</dbReference>
<dbReference type="PROSITE" id="PS00323">
    <property type="entry name" value="RIBOSOMAL_S19"/>
    <property type="match status" value="1"/>
</dbReference>
<keyword id="KW-0002">3D-structure</keyword>
<keyword id="KW-0496">Mitochondrion</keyword>
<keyword id="KW-1185">Reference proteome</keyword>
<keyword id="KW-0687">Ribonucleoprotein</keyword>
<keyword id="KW-0689">Ribosomal protein</keyword>
<reference key="1">
    <citation type="journal article" date="1997" name="Nature">
        <title>The nucleotide sequence of Saccharomyces cerevisiae chromosome XIV and its evolutionary implications.</title>
        <authorList>
            <person name="Philippsen P."/>
            <person name="Kleine K."/>
            <person name="Poehlmann R."/>
            <person name="Duesterhoeft A."/>
            <person name="Hamberg K."/>
            <person name="Hegemann J.H."/>
            <person name="Obermaier B."/>
            <person name="Urrestarazu L.A."/>
            <person name="Aert R."/>
            <person name="Albermann K."/>
            <person name="Altmann R."/>
            <person name="Andre B."/>
            <person name="Baladron V."/>
            <person name="Ballesta J.P.G."/>
            <person name="Becam A.-M."/>
            <person name="Beinhauer J.D."/>
            <person name="Boskovic J."/>
            <person name="Buitrago M.J."/>
            <person name="Bussereau F."/>
            <person name="Coster F."/>
            <person name="Crouzet M."/>
            <person name="D'Angelo M."/>
            <person name="Dal Pero F."/>
            <person name="De Antoni A."/>
            <person name="del Rey F."/>
            <person name="Doignon F."/>
            <person name="Domdey H."/>
            <person name="Dubois E."/>
            <person name="Fiedler T.A."/>
            <person name="Fleig U."/>
            <person name="Floeth M."/>
            <person name="Fritz C."/>
            <person name="Gaillardin C."/>
            <person name="Garcia-Cantalejo J.M."/>
            <person name="Glansdorff N."/>
            <person name="Goffeau A."/>
            <person name="Gueldener U."/>
            <person name="Herbert C.J."/>
            <person name="Heumann K."/>
            <person name="Heuss-Neitzel D."/>
            <person name="Hilbert H."/>
            <person name="Hinni K."/>
            <person name="Iraqui Houssaini I."/>
            <person name="Jacquet M."/>
            <person name="Jimenez A."/>
            <person name="Jonniaux J.-L."/>
            <person name="Karpfinger-Hartl L."/>
            <person name="Lanfranchi G."/>
            <person name="Lepingle A."/>
            <person name="Levesque H."/>
            <person name="Lyck R."/>
            <person name="Maftahi M."/>
            <person name="Mallet L."/>
            <person name="Maurer C.T.C."/>
            <person name="Messenguy F."/>
            <person name="Mewes H.-W."/>
            <person name="Moestl D."/>
            <person name="Nasr F."/>
            <person name="Nicaud J.-M."/>
            <person name="Niedenthal R.K."/>
            <person name="Pandolfo D."/>
            <person name="Pierard A."/>
            <person name="Piravandi E."/>
            <person name="Planta R.J."/>
            <person name="Pohl T.M."/>
            <person name="Purnelle B."/>
            <person name="Rebischung C."/>
            <person name="Remacha M.A."/>
            <person name="Revuelta J.L."/>
            <person name="Rinke M."/>
            <person name="Saiz J.E."/>
            <person name="Sartorello F."/>
            <person name="Scherens B."/>
            <person name="Sen-Gupta M."/>
            <person name="Soler-Mira A."/>
            <person name="Urbanus J.H.M."/>
            <person name="Valle G."/>
            <person name="Van Dyck L."/>
            <person name="Verhasselt P."/>
            <person name="Vierendeels F."/>
            <person name="Vissers S."/>
            <person name="Voet M."/>
            <person name="Volckaert G."/>
            <person name="Wach A."/>
            <person name="Wambutt R."/>
            <person name="Wedler H."/>
            <person name="Zollner A."/>
            <person name="Hani J."/>
        </authorList>
    </citation>
    <scope>NUCLEOTIDE SEQUENCE [LARGE SCALE GENOMIC DNA]</scope>
    <source>
        <strain>ATCC 204508 / S288c</strain>
    </source>
</reference>
<reference key="2">
    <citation type="journal article" date="2014" name="G3 (Bethesda)">
        <title>The reference genome sequence of Saccharomyces cerevisiae: Then and now.</title>
        <authorList>
            <person name="Engel S.R."/>
            <person name="Dietrich F.S."/>
            <person name="Fisk D.G."/>
            <person name="Binkley G."/>
            <person name="Balakrishnan R."/>
            <person name="Costanzo M.C."/>
            <person name="Dwight S.S."/>
            <person name="Hitz B.C."/>
            <person name="Karra K."/>
            <person name="Nash R.S."/>
            <person name="Weng S."/>
            <person name="Wong E.D."/>
            <person name="Lloyd P."/>
            <person name="Skrzypek M.S."/>
            <person name="Miyasato S.R."/>
            <person name="Simison M."/>
            <person name="Cherry J.M."/>
        </authorList>
    </citation>
    <scope>GENOME REANNOTATION</scope>
    <source>
        <strain>ATCC 204508 / S288c</strain>
    </source>
</reference>
<reference key="3">
    <citation type="journal article" date="2001" name="J. Biol. Chem.">
        <title>Identification of 12 new yeast mitochondrial ribosomal proteins including 6 that have no prokaryotic homologues.</title>
        <authorList>
            <person name="Saveanu C."/>
            <person name="Fromont-Racine M."/>
            <person name="Harington A."/>
            <person name="Ricard F."/>
            <person name="Namane A."/>
            <person name="Jacquier A."/>
        </authorList>
    </citation>
    <scope>SUBCELLULAR LOCATION</scope>
    <scope>IDENTIFICATION IN THE MITOCHONDRIAL RIBOSOMAL SMALL COMPLEX</scope>
    <scope>IDENTIFICATION BY MASS SPECTROMETRY</scope>
</reference>
<reference key="4">
    <citation type="journal article" date="2002" name="Eur. J. Biochem.">
        <title>Tag-mediated isolation of yeast mitochondrial ribosome and mass spectrometric identification of its new components.</title>
        <authorList>
            <person name="Gan X."/>
            <person name="Kitakawa M."/>
            <person name="Yoshino K."/>
            <person name="Oshiro N."/>
            <person name="Yonezawa K."/>
            <person name="Isono K."/>
        </authorList>
    </citation>
    <scope>IDENTIFICATION IN THE MITOCHONDRIAL RIBOSOMAL SMALL COMPLEX</scope>
    <scope>IDENTIFICATION BY MASS SPECTROMETRY</scope>
</reference>
<reference key="5">
    <citation type="journal article" date="2003" name="Proc. Natl. Acad. Sci. U.S.A.">
        <title>The proteome of Saccharomyces cerevisiae mitochondria.</title>
        <authorList>
            <person name="Sickmann A."/>
            <person name="Reinders J."/>
            <person name="Wagner Y."/>
            <person name="Joppich C."/>
            <person name="Zahedi R.P."/>
            <person name="Meyer H.E."/>
            <person name="Schoenfisch B."/>
            <person name="Perschil I."/>
            <person name="Chacinska A."/>
            <person name="Guiard B."/>
            <person name="Rehling P."/>
            <person name="Pfanner N."/>
            <person name="Meisinger C."/>
        </authorList>
    </citation>
    <scope>SUBCELLULAR LOCATION [LARGE SCALE ANALYSIS]</scope>
    <source>
        <strain>ATCC 76625 / YPH499</strain>
    </source>
</reference>
<reference key="6">
    <citation type="journal article" date="2015" name="Nat. Commun.">
        <title>Organization of the mitochondrial translation machinery studied in situ by cryoelectron tomography.</title>
        <authorList>
            <person name="Pfeffer S."/>
            <person name="Woellhaf M.W."/>
            <person name="Herrmann J.M."/>
            <person name="Forster F."/>
        </authorList>
    </citation>
    <scope>SUBCELLULAR LOCATION</scope>
</reference>
<reference key="7">
    <citation type="journal article" date="2017" name="Science">
        <title>The structure of the yeast mitochondrial ribosome.</title>
        <authorList>
            <person name="Desai N."/>
            <person name="Brown A."/>
            <person name="Amunts A."/>
            <person name="Ramakrishnan V."/>
        </authorList>
    </citation>
    <scope>STRUCTURE BY ELECTRON MICROSCOPY (3.25 ANGSTROMS)</scope>
    <scope>SUBUNIT</scope>
</reference>
<sequence>MQPAARLLSRSVWKGPNIVPLPIREAMTKGTPIRTNARAATILPQFVGLKFQIHNGKEYVPIEISEDMVGHKLGEFAPTRKRFSYTQTKNK</sequence>
<accession>P53733</accession>
<accession>D6W1L3</accession>
<name>RT19_YEAST</name>
<organism>
    <name type="scientific">Saccharomyces cerevisiae (strain ATCC 204508 / S288c)</name>
    <name type="common">Baker's yeast</name>
    <dbReference type="NCBI Taxonomy" id="559292"/>
    <lineage>
        <taxon>Eukaryota</taxon>
        <taxon>Fungi</taxon>
        <taxon>Dikarya</taxon>
        <taxon>Ascomycota</taxon>
        <taxon>Saccharomycotina</taxon>
        <taxon>Saccharomycetes</taxon>
        <taxon>Saccharomycetales</taxon>
        <taxon>Saccharomycetaceae</taxon>
        <taxon>Saccharomyces</taxon>
    </lineage>
</organism>
<feature type="chain" id="PRO_0000130025" description="Small ribosomal subunit protein uS19m">
    <location>
        <begin position="1"/>
        <end position="91"/>
    </location>
</feature>
<feature type="helix" evidence="10">
    <location>
        <begin position="12"/>
        <end position="14"/>
    </location>
</feature>
<feature type="helix" evidence="10">
    <location>
        <begin position="24"/>
        <end position="28"/>
    </location>
</feature>
<feature type="strand" evidence="10">
    <location>
        <begin position="33"/>
        <end position="35"/>
    </location>
</feature>
<feature type="helix" evidence="10">
    <location>
        <begin position="44"/>
        <end position="46"/>
    </location>
</feature>
<feature type="strand" evidence="10">
    <location>
        <begin position="50"/>
        <end position="54"/>
    </location>
</feature>
<feature type="strand" evidence="10">
    <location>
        <begin position="56"/>
        <end position="63"/>
    </location>
</feature>
<feature type="strand" evidence="10">
    <location>
        <begin position="66"/>
        <end position="68"/>
    </location>
</feature>
<feature type="helix" evidence="10">
    <location>
        <begin position="73"/>
        <end position="76"/>
    </location>
</feature>
<comment type="function">
    <text evidence="8 9">Component of the mitochondrial ribosome (mitoribosome), a dedicated translation machinery responsible for the synthesis of mitochondrial genome-encoded proteins, including at least some of the essential transmembrane subunits of the mitochondrial respiratory chain. The mitoribosomes are attached to the mitochondrial inner membrane and translation products are cotranslationally integrated into the membrane.</text>
</comment>
<comment type="subunit">
    <text evidence="1 2 5">Component of the mitochondrial small ribosomal subunit (mt-SSU). Mature yeast 74S mitochondrial ribosomes consist of a small (37S) and a large (54S) subunit. The 37S small subunit contains a 15S ribosomal RNA (15S mt-rRNA) and 34 different proteins. The 54S large subunit contains a 21S rRNA (21S mt-rRNA) and 46 different proteins.</text>
</comment>
<comment type="subcellular location">
    <subcellularLocation>
        <location evidence="1 3">Mitochondrion</location>
    </subcellularLocation>
    <text evidence="4">Mitoribosomes are tethered to the mitochondrial inner membrane and spatially aligned with the membrane insertion machinery through two distinct membrane contact sites, formed by the 21S rRNA expansion segment 96-ES1 and the inner membrane protein MBA1.</text>
</comment>
<comment type="similarity">
    <text evidence="7">Belongs to the universal ribosomal protein uS19 family.</text>
</comment>
<evidence type="ECO:0000269" key="1">
    <source>
    </source>
</evidence>
<evidence type="ECO:0000269" key="2">
    <source>
    </source>
</evidence>
<evidence type="ECO:0000269" key="3">
    <source>
    </source>
</evidence>
<evidence type="ECO:0000269" key="4">
    <source>
    </source>
</evidence>
<evidence type="ECO:0000269" key="5">
    <source>
    </source>
</evidence>
<evidence type="ECO:0000303" key="6">
    <source>
    </source>
</evidence>
<evidence type="ECO:0000305" key="7"/>
<evidence type="ECO:0000305" key="8">
    <source>
    </source>
</evidence>
<evidence type="ECO:0000305" key="9">
    <source>
    </source>
</evidence>
<evidence type="ECO:0007829" key="10">
    <source>
        <dbReference type="PDB" id="8D8L"/>
    </source>
</evidence>
<gene>
    <name type="primary">RSM19</name>
    <name type="ordered locus">YNR037C</name>
    <name type="ORF">N3300</name>
</gene>
<proteinExistence type="evidence at protein level"/>